<name>T53I1_MOUSE</name>
<sequence>MFQRLNKMFVGEVTTSSSQEPEFSEKEDDEWILVDFIDTCPGFSAEEEEEDEDIGEESSAEHTSVFSCLPASLECLTDTSDSCFLQFESCPMEESWFITPPPCFTAGGLTTIKVETSPMENLLIEHPSMSVYAVHNSCPGLSEASCGNDEYNSSGPRMEAQSEMGKHIHCCVAALAAQATFLEQPKSFRPSQWIKGHSERQSLNRNGLRRQNLTRDCHTRQMKHSGWVVHQPCPRQYNY</sequence>
<comment type="function">
    <text evidence="3 4 5 6">Antiproliferative and proapoptotic protein involved in cell stress response which acts as a dual regulator of transcription and autophagy. Acts as a positive regulator of autophagy. In response to cellular stress or activation of autophagy, relocates to autophagosomes where it interacts with autophagosome-associated proteins GABARAP, GABARAPL1/L2, MAP1LC3A/B/C and regulates autophagy. Acts as an antioxidant and plays a major role in p53/TP53-driven oxidative stress response. Possesses both a p53/TP53-independent intracellular reactive oxygen species (ROS) regulatory function and a p53/TP53-dependent transcription regulatory function. Positively regulates p53/TP53 and p73/TP73 and stimulates their capacity to induce apoptosis and regulate cell cycle. In response to double-strand DNA breaks, promotes p53/TP53 phosphorylation on 'Ser-46' and subsequent apoptosis. Acts as a tumor suppressor by inducing cell death by an autophagy and caspase-dependent mechanism. Can reduce cell migration by regulating the expression of SPARC.</text>
</comment>
<comment type="subunit">
    <text evidence="1">Interacts with p53/TP53 and HIPK2. Interacts with PRKCG, GABARAP, GABARAPL1, GABARAPL2, MAP1LC3A, MAP1LC3B and MAP1LC3C.</text>
</comment>
<comment type="subcellular location">
    <subcellularLocation>
        <location evidence="1">Cytoplasm</location>
        <location evidence="1">Cytosol</location>
    </subcellularLocation>
    <subcellularLocation>
        <location evidence="3">Nucleus</location>
    </subcellularLocation>
    <subcellularLocation>
        <location evidence="1">Nucleus</location>
        <location evidence="1">PML body</location>
    </subcellularLocation>
    <subcellularLocation>
        <location evidence="1">Cytoplasmic vesicle</location>
        <location evidence="1">Autophagosome</location>
    </subcellularLocation>
    <text evidence="1">Shuttles between the nucleus and the cytoplasm, depending on cellular stress conditions, and re-localizes to autophagosomes on autophagy activation.</text>
</comment>
<comment type="subcellular location">
    <molecule>Isoform 2</molecule>
    <subcellularLocation>
        <location>Cytoplasm</location>
    </subcellularLocation>
</comment>
<comment type="alternative products">
    <event type="alternative splicing"/>
    <isoform>
        <id>Q9QXE4-1</id>
        <name>1</name>
        <name>SIP27</name>
        <name>TEAP</name>
        <sequence type="displayed"/>
    </isoform>
    <isoform>
        <id>Q9QXE4-2</id>
        <name>2</name>
        <name>SIP18</name>
        <sequence type="described" ref="VSP_013177"/>
    </isoform>
</comment>
<comment type="tissue specificity">
    <text evidence="2 3">Ubiquitously expressed with highest levels in the thymus.</text>
</comment>
<comment type="induction">
    <text evidence="3">By adriamycin, methymethane sulfonate, ethanol, H(2)O(2), ultraviolet irradiation and heat shock. Rapidly induced in acinar cells of the pancreas with acute pancreatitis upon caerulein treatment.</text>
</comment>
<comment type="domain">
    <text evidence="1">The LC3 interacting region (LIR) motif mediates interaction with GABARAP, GABARAPL1, GABARAPL2, MAP1LC3A, MAP1LC3B and MAP1LC3C.</text>
</comment>
<reference key="1">
    <citation type="journal article" date="1999" name="Immunogenetics">
        <title>Differential gene expression in CD3epsilon- and RAG1-deficient thymuses: definition of a set of genes potentially involved in thymocyte maturation.</title>
        <authorList>
            <person name="Carrier A."/>
            <person name="Nguyen C."/>
            <person name="Victorero G."/>
            <person name="Granjeaud S."/>
            <person name="Rocha D."/>
            <person name="Bernard K."/>
            <person name="Miazek A."/>
            <person name="Ferrier P."/>
            <person name="Malissen M."/>
            <person name="Naquet P."/>
            <person name="Malissen B."/>
            <person name="Jordan B.R."/>
        </authorList>
    </citation>
    <scope>NUCLEOTIDE SEQUENCE [MRNA] (ISOFORM 1)</scope>
    <scope>TISSUE SPECIFICITY</scope>
    <source>
        <tissue>Thymus</tissue>
    </source>
</reference>
<reference key="2">
    <citation type="journal article" date="2001" name="J. Biol. Chem.">
        <title>Molecular and functional characterization of the stress-induced protein (SIP) gene and its two transcripts generated by alternative splicing. SIP induced by stress and promotes cell death.</title>
        <authorList>
            <person name="Tomasini R."/>
            <person name="Samir A.A."/>
            <person name="Vaccaro M.I."/>
            <person name="Pebusque M.-J."/>
            <person name="Dagorn J.-C."/>
            <person name="Iovanna J.L."/>
            <person name="Dusetti N.J."/>
        </authorList>
    </citation>
    <scope>NUCLEOTIDE SEQUENCE [MRNA] (ISOFORMS 1 AND 2)</scope>
    <scope>TISSUE SPECIFICITY</scope>
    <scope>SUBCELLULAR LOCATION</scope>
    <scope>INDUCTION</scope>
    <scope>FUNCTION</scope>
</reference>
<reference key="3">
    <citation type="journal article" date="2005" name="Oncogene">
        <title>TP53INP1 is a novel p73 target gene that induces cell cycle arrest and cell death by modulating p73 transcriptional activity.</title>
        <authorList>
            <person name="Tomasini R."/>
            <person name="Seux M."/>
            <person name="Nowak J."/>
            <person name="Bontemps C."/>
            <person name="Carrier A."/>
            <person name="Dagorn J.C."/>
            <person name="Pebusque M.J."/>
            <person name="Iovanna J.L."/>
            <person name="Dusetti N.J."/>
        </authorList>
    </citation>
    <scope>FUNCTION</scope>
</reference>
<reference key="4">
    <citation type="journal article" date="2009" name="Cancer Res.">
        <title>Tumor protein 53-induced nuclear protein 1 is a major mediator of p53 antioxidant function.</title>
        <authorList>
            <person name="Cano C.E."/>
            <person name="Gommeaux J."/>
            <person name="Pietri S."/>
            <person name="Culcasi M."/>
            <person name="Garcia S."/>
            <person name="Seux M."/>
            <person name="Barelier S."/>
            <person name="Vasseur S."/>
            <person name="Spoto R.P."/>
            <person name="Pebusque M.J."/>
            <person name="Dusetti N.J."/>
            <person name="Iovanna J.L."/>
            <person name="Carrier A."/>
        </authorList>
    </citation>
    <scope>FUNCTION</scope>
</reference>
<reference key="5">
    <citation type="journal article" date="2011" name="Oncogene">
        <title>TP53INP1 decreases pancreatic cancer cell migration by regulating SPARC expression.</title>
        <authorList>
            <person name="Seux M."/>
            <person name="Peuget S."/>
            <person name="Montero M.P."/>
            <person name="Siret C."/>
            <person name="Rigot V."/>
            <person name="Clerc P."/>
            <person name="Gigoux V."/>
            <person name="Pellegrino E."/>
            <person name="Pouyet L."/>
            <person name="N'Guessan P."/>
            <person name="Garcia S."/>
            <person name="Dufresne M."/>
            <person name="Iovanna J.L."/>
            <person name="Carrier A."/>
            <person name="Andre F."/>
            <person name="Dusetti N.J."/>
        </authorList>
    </citation>
    <scope>FUNCTION</scope>
</reference>
<keyword id="KW-0010">Activator</keyword>
<keyword id="KW-0025">Alternative splicing</keyword>
<keyword id="KW-0049">Antioxidant</keyword>
<keyword id="KW-0053">Apoptosis</keyword>
<keyword id="KW-0072">Autophagy</keyword>
<keyword id="KW-0963">Cytoplasm</keyword>
<keyword id="KW-0968">Cytoplasmic vesicle</keyword>
<keyword id="KW-0539">Nucleus</keyword>
<keyword id="KW-1185">Reference proteome</keyword>
<keyword id="KW-0804">Transcription</keyword>
<keyword id="KW-0805">Transcription regulation</keyword>
<keyword id="KW-0043">Tumor suppressor</keyword>
<accession>Q9QXE4</accession>
<accession>Q923I6</accession>
<evidence type="ECO:0000250" key="1"/>
<evidence type="ECO:0000269" key="2">
    <source>
    </source>
</evidence>
<evidence type="ECO:0000269" key="3">
    <source>
    </source>
</evidence>
<evidence type="ECO:0000269" key="4">
    <source>
    </source>
</evidence>
<evidence type="ECO:0000269" key="5">
    <source>
    </source>
</evidence>
<evidence type="ECO:0000269" key="6">
    <source>
    </source>
</evidence>
<evidence type="ECO:0000303" key="7">
    <source>
    </source>
</evidence>
<feature type="chain" id="PRO_0000072407" description="Tumor protein p53-inducible nuclear protein 1">
    <location>
        <begin position="1"/>
        <end position="239"/>
    </location>
</feature>
<feature type="short sequence motif" description="LIR">
    <location>
        <begin position="25"/>
        <end position="37"/>
    </location>
</feature>
<feature type="splice variant" id="VSP_013177" description="In isoform 2." evidence="7">
    <original>MEAQSEMGKHIHCCVAALAAQATFLEQPKSFRPSQWIKGHSERQSLNRNGLRRQNLTRDCHTRQMKHSGWVVHQPCPRQYNY</original>
    <variation>ARKSCL</variation>
    <location>
        <begin position="158"/>
        <end position="239"/>
    </location>
</feature>
<organism>
    <name type="scientific">Mus musculus</name>
    <name type="common">Mouse</name>
    <dbReference type="NCBI Taxonomy" id="10090"/>
    <lineage>
        <taxon>Eukaryota</taxon>
        <taxon>Metazoa</taxon>
        <taxon>Chordata</taxon>
        <taxon>Craniata</taxon>
        <taxon>Vertebrata</taxon>
        <taxon>Euteleostomi</taxon>
        <taxon>Mammalia</taxon>
        <taxon>Eutheria</taxon>
        <taxon>Euarchontoglires</taxon>
        <taxon>Glires</taxon>
        <taxon>Rodentia</taxon>
        <taxon>Myomorpha</taxon>
        <taxon>Muroidea</taxon>
        <taxon>Muridae</taxon>
        <taxon>Murinae</taxon>
        <taxon>Mus</taxon>
        <taxon>Mus</taxon>
    </lineage>
</organism>
<proteinExistence type="evidence at transcript level"/>
<protein>
    <recommendedName>
        <fullName>Tumor protein p53-inducible nuclear protein 1</fullName>
    </recommendedName>
    <alternativeName>
        <fullName>Stress-induced protein</fullName>
    </alternativeName>
    <alternativeName>
        <fullName>Thymus-expressed acidic protein</fullName>
        <shortName>TEAP</shortName>
    </alternativeName>
    <alternativeName>
        <fullName>p53-dependent damage-inducible nuclear protein 1</fullName>
        <shortName>p53DINP1</shortName>
    </alternativeName>
</protein>
<gene>
    <name type="primary">Trp53inp1</name>
    <name type="synonym">Sip</name>
</gene>
<dbReference type="EMBL" id="AJ131776">
    <property type="protein sequence ID" value="CAB66138.1"/>
    <property type="molecule type" value="mRNA"/>
</dbReference>
<dbReference type="EMBL" id="AY034611">
    <property type="protein sequence ID" value="AAK60419.1"/>
    <property type="molecule type" value="mRNA"/>
</dbReference>
<dbReference type="EMBL" id="AY034612">
    <property type="protein sequence ID" value="AAK60420.1"/>
    <property type="molecule type" value="mRNA"/>
</dbReference>
<dbReference type="CCDS" id="CCDS17964.1">
    <molecule id="Q9QXE4-1"/>
</dbReference>
<dbReference type="RefSeq" id="NP_001186034.1">
    <molecule id="Q9QXE4-2"/>
    <property type="nucleotide sequence ID" value="NM_001199105.2"/>
</dbReference>
<dbReference type="RefSeq" id="NP_068697.1">
    <molecule id="Q9QXE4-1"/>
    <property type="nucleotide sequence ID" value="NM_021897.4"/>
</dbReference>
<dbReference type="SMR" id="Q9QXE4"/>
<dbReference type="FunCoup" id="Q9QXE4">
    <property type="interactions" value="2962"/>
</dbReference>
<dbReference type="STRING" id="10090.ENSMUSP00000029865"/>
<dbReference type="PhosphoSitePlus" id="Q9QXE4"/>
<dbReference type="PaxDb" id="10090-ENSMUSP00000029865"/>
<dbReference type="Antibodypedia" id="12951">
    <property type="antibodies" value="348 antibodies from 39 providers"/>
</dbReference>
<dbReference type="DNASU" id="60599"/>
<dbReference type="Ensembl" id="ENSMUST00000029865.4">
    <molecule id="Q9QXE4-1"/>
    <property type="protein sequence ID" value="ENSMUSP00000029865.4"/>
    <property type="gene ID" value="ENSMUSG00000028211.12"/>
</dbReference>
<dbReference type="GeneID" id="60599"/>
<dbReference type="KEGG" id="mmu:60599"/>
<dbReference type="UCSC" id="uc008ryz.1">
    <molecule id="Q9QXE4-1"/>
    <property type="organism name" value="mouse"/>
</dbReference>
<dbReference type="UCSC" id="uc008rzb.1">
    <molecule id="Q9QXE4-2"/>
    <property type="organism name" value="mouse"/>
</dbReference>
<dbReference type="AGR" id="MGI:1926609"/>
<dbReference type="CTD" id="60599"/>
<dbReference type="MGI" id="MGI:1926609">
    <property type="gene designation" value="Trp53inp1"/>
</dbReference>
<dbReference type="VEuPathDB" id="HostDB:ENSMUSG00000028211"/>
<dbReference type="eggNOG" id="ENOG502QTG4">
    <property type="taxonomic scope" value="Eukaryota"/>
</dbReference>
<dbReference type="GeneTree" id="ENSGT00530000063829"/>
<dbReference type="HOGENOM" id="CLU_091034_1_0_1"/>
<dbReference type="InParanoid" id="Q9QXE4"/>
<dbReference type="OMA" id="VGQHIHC"/>
<dbReference type="OrthoDB" id="10041339at2759"/>
<dbReference type="PhylomeDB" id="Q9QXE4"/>
<dbReference type="TreeFam" id="TF333017"/>
<dbReference type="Reactome" id="R-MMU-6804756">
    <property type="pathway name" value="Regulation of TP53 Activity through Phosphorylation"/>
</dbReference>
<dbReference type="BioGRID-ORCS" id="60599">
    <property type="hits" value="2 hits in 77 CRISPR screens"/>
</dbReference>
<dbReference type="ChiTaRS" id="Trp53inp1">
    <property type="organism name" value="mouse"/>
</dbReference>
<dbReference type="PRO" id="PR:Q9QXE4"/>
<dbReference type="Proteomes" id="UP000000589">
    <property type="component" value="Chromosome 4"/>
</dbReference>
<dbReference type="RNAct" id="Q9QXE4">
    <property type="molecule type" value="protein"/>
</dbReference>
<dbReference type="Bgee" id="ENSMUSG00000028211">
    <property type="expression patterns" value="Expressed in stroma of bone marrow and 265 other cell types or tissues"/>
</dbReference>
<dbReference type="ExpressionAtlas" id="Q9QXE4">
    <property type="expression patterns" value="baseline and differential"/>
</dbReference>
<dbReference type="GO" id="GO:0005776">
    <property type="term" value="C:autophagosome"/>
    <property type="evidence" value="ECO:0000250"/>
    <property type="project" value="UniProtKB"/>
</dbReference>
<dbReference type="GO" id="GO:0031410">
    <property type="term" value="C:cytoplasmic vesicle"/>
    <property type="evidence" value="ECO:0007669"/>
    <property type="project" value="UniProtKB-KW"/>
</dbReference>
<dbReference type="GO" id="GO:0005829">
    <property type="term" value="C:cytosol"/>
    <property type="evidence" value="ECO:0000250"/>
    <property type="project" value="UniProtKB"/>
</dbReference>
<dbReference type="GO" id="GO:0005634">
    <property type="term" value="C:nucleus"/>
    <property type="evidence" value="ECO:0000314"/>
    <property type="project" value="MGI"/>
</dbReference>
<dbReference type="GO" id="GO:0016605">
    <property type="term" value="C:PML body"/>
    <property type="evidence" value="ECO:0007669"/>
    <property type="project" value="UniProtKB-SubCell"/>
</dbReference>
<dbReference type="GO" id="GO:0016209">
    <property type="term" value="F:antioxidant activity"/>
    <property type="evidence" value="ECO:0000315"/>
    <property type="project" value="UniProtKB"/>
</dbReference>
<dbReference type="GO" id="GO:0006915">
    <property type="term" value="P:apoptotic process"/>
    <property type="evidence" value="ECO:0007669"/>
    <property type="project" value="UniProtKB-KW"/>
</dbReference>
<dbReference type="GO" id="GO:0048102">
    <property type="term" value="P:autophagic cell death"/>
    <property type="evidence" value="ECO:0000250"/>
    <property type="project" value="UniProtKB"/>
</dbReference>
<dbReference type="GO" id="GO:0006914">
    <property type="term" value="P:autophagy"/>
    <property type="evidence" value="ECO:0007669"/>
    <property type="project" value="UniProtKB-KW"/>
</dbReference>
<dbReference type="GO" id="GO:0071361">
    <property type="term" value="P:cellular response to ethanol"/>
    <property type="evidence" value="ECO:0000314"/>
    <property type="project" value="MGI"/>
</dbReference>
<dbReference type="GO" id="GO:0071447">
    <property type="term" value="P:cellular response to hydroperoxide"/>
    <property type="evidence" value="ECO:0000314"/>
    <property type="project" value="MGI"/>
</dbReference>
<dbReference type="GO" id="GO:0072703">
    <property type="term" value="P:cellular response to methyl methanesulfonate"/>
    <property type="evidence" value="ECO:0000314"/>
    <property type="project" value="MGI"/>
</dbReference>
<dbReference type="GO" id="GO:0034644">
    <property type="term" value="P:cellular response to UV"/>
    <property type="evidence" value="ECO:0000314"/>
    <property type="project" value="MGI"/>
</dbReference>
<dbReference type="GO" id="GO:0030336">
    <property type="term" value="P:negative regulation of cell migration"/>
    <property type="evidence" value="ECO:0000315"/>
    <property type="project" value="UniProtKB"/>
</dbReference>
<dbReference type="GO" id="GO:0008285">
    <property type="term" value="P:negative regulation of cell population proliferation"/>
    <property type="evidence" value="ECO:0000315"/>
    <property type="project" value="UniProtKB"/>
</dbReference>
<dbReference type="GO" id="GO:0048147">
    <property type="term" value="P:negative regulation of fibroblast proliferation"/>
    <property type="evidence" value="ECO:0000315"/>
    <property type="project" value="BHF-UCL"/>
</dbReference>
<dbReference type="GO" id="GO:0010629">
    <property type="term" value="P:negative regulation of gene expression"/>
    <property type="evidence" value="ECO:0000315"/>
    <property type="project" value="BHF-UCL"/>
</dbReference>
<dbReference type="GO" id="GO:1904761">
    <property type="term" value="P:negative regulation of myofibroblast differentiation"/>
    <property type="evidence" value="ECO:0000315"/>
    <property type="project" value="BHF-UCL"/>
</dbReference>
<dbReference type="GO" id="GO:0043065">
    <property type="term" value="P:positive regulation of apoptotic process"/>
    <property type="evidence" value="ECO:0000314"/>
    <property type="project" value="MGI"/>
</dbReference>
<dbReference type="GO" id="GO:2001235">
    <property type="term" value="P:positive regulation of apoptotic signaling pathway"/>
    <property type="evidence" value="ECO:0000316"/>
    <property type="project" value="MGI"/>
</dbReference>
<dbReference type="GO" id="GO:0010508">
    <property type="term" value="P:positive regulation of autophagy"/>
    <property type="evidence" value="ECO:0000250"/>
    <property type="project" value="UniProtKB"/>
</dbReference>
<dbReference type="GO" id="GO:0045893">
    <property type="term" value="P:positive regulation of DNA-templated transcription"/>
    <property type="evidence" value="ECO:0000250"/>
    <property type="project" value="UniProtKB"/>
</dbReference>
<dbReference type="GO" id="GO:0010628">
    <property type="term" value="P:positive regulation of gene expression"/>
    <property type="evidence" value="ECO:0000315"/>
    <property type="project" value="BHF-UCL"/>
</dbReference>
<dbReference type="GO" id="GO:0009408">
    <property type="term" value="P:response to heat"/>
    <property type="evidence" value="ECO:0000314"/>
    <property type="project" value="MGI"/>
</dbReference>
<dbReference type="InterPro" id="IPR029431">
    <property type="entry name" value="TP53INP"/>
</dbReference>
<dbReference type="PANTHER" id="PTHR31671">
    <property type="entry name" value="DIABETES AND OBESITY REGULATED, ISOFORM G"/>
    <property type="match status" value="1"/>
</dbReference>
<dbReference type="PANTHER" id="PTHR31671:SF0">
    <property type="entry name" value="TUMOR PROTEIN P53-INDUCIBLE NUCLEAR PROTEIN 1"/>
    <property type="match status" value="1"/>
</dbReference>
<dbReference type="Pfam" id="PF14839">
    <property type="entry name" value="DOR"/>
    <property type="match status" value="1"/>
</dbReference>